<organism>
    <name type="scientific">Pseudomonas aeruginosa (strain ATCC 15692 / DSM 22644 / CIP 104116 / JCM 14847 / LMG 12228 / 1C / PRS 101 / PAO1)</name>
    <dbReference type="NCBI Taxonomy" id="208964"/>
    <lineage>
        <taxon>Bacteria</taxon>
        <taxon>Pseudomonadati</taxon>
        <taxon>Pseudomonadota</taxon>
        <taxon>Gammaproteobacteria</taxon>
        <taxon>Pseudomonadales</taxon>
        <taxon>Pseudomonadaceae</taxon>
        <taxon>Pseudomonas</taxon>
    </lineage>
</organism>
<feature type="chain" id="PRO_0000166139" description="D-amino acid dehydrogenase 2">
    <location>
        <begin position="1"/>
        <end position="416"/>
    </location>
</feature>
<feature type="binding site" evidence="2">
    <location>
        <begin position="5"/>
        <end position="19"/>
    </location>
    <ligand>
        <name>FAD</name>
        <dbReference type="ChEBI" id="CHEBI:57692"/>
    </ligand>
</feature>
<reference key="1">
    <citation type="journal article" date="2000" name="Nature">
        <title>Complete genome sequence of Pseudomonas aeruginosa PAO1, an opportunistic pathogen.</title>
        <authorList>
            <person name="Stover C.K."/>
            <person name="Pham X.-Q.T."/>
            <person name="Erwin A.L."/>
            <person name="Mizoguchi S.D."/>
            <person name="Warrener P."/>
            <person name="Hickey M.J."/>
            <person name="Brinkman F.S.L."/>
            <person name="Hufnagle W.O."/>
            <person name="Kowalik D.J."/>
            <person name="Lagrou M."/>
            <person name="Garber R.L."/>
            <person name="Goltry L."/>
            <person name="Tolentino E."/>
            <person name="Westbrock-Wadman S."/>
            <person name="Yuan Y."/>
            <person name="Brody L.L."/>
            <person name="Coulter S.N."/>
            <person name="Folger K.R."/>
            <person name="Kas A."/>
            <person name="Larbig K."/>
            <person name="Lim R.M."/>
            <person name="Smith K.A."/>
            <person name="Spencer D.H."/>
            <person name="Wong G.K.-S."/>
            <person name="Wu Z."/>
            <person name="Paulsen I.T."/>
            <person name="Reizer J."/>
            <person name="Saier M.H. Jr."/>
            <person name="Hancock R.E.W."/>
            <person name="Lory S."/>
            <person name="Olson M.V."/>
        </authorList>
    </citation>
    <scope>NUCLEOTIDE SEQUENCE [LARGE SCALE GENOMIC DNA]</scope>
    <source>
        <strain>ATCC 15692 / DSM 22644 / CIP 104116 / JCM 14847 / LMG 12228 / 1C / PRS 101 / PAO1</strain>
    </source>
</reference>
<keyword id="KW-0274">FAD</keyword>
<keyword id="KW-0285">Flavoprotein</keyword>
<keyword id="KW-0560">Oxidoreductase</keyword>
<keyword id="KW-1185">Reference proteome</keyword>
<protein>
    <recommendedName>
        <fullName>D-amino acid dehydrogenase 2</fullName>
        <ecNumber>1.4.99.-</ecNumber>
    </recommendedName>
</protein>
<evidence type="ECO:0000250" key="1"/>
<evidence type="ECO:0000255" key="2"/>
<evidence type="ECO:0000305" key="3"/>
<name>DADA2_PSEAE</name>
<accession>Q9HU99</accession>
<dbReference type="EC" id="1.4.99.-"/>
<dbReference type="EMBL" id="AE004091">
    <property type="protein sequence ID" value="AAG08469.1"/>
    <property type="molecule type" value="Genomic_DNA"/>
</dbReference>
<dbReference type="PIR" id="F83010">
    <property type="entry name" value="F83010"/>
</dbReference>
<dbReference type="RefSeq" id="NP_253771.1">
    <property type="nucleotide sequence ID" value="NC_002516.2"/>
</dbReference>
<dbReference type="RefSeq" id="WP_003095928.1">
    <property type="nucleotide sequence ID" value="NZ_QZGE01000002.1"/>
</dbReference>
<dbReference type="SMR" id="Q9HU99"/>
<dbReference type="STRING" id="208964.PA5084"/>
<dbReference type="PaxDb" id="208964-PA5084"/>
<dbReference type="GeneID" id="880266"/>
<dbReference type="KEGG" id="pae:PA5084"/>
<dbReference type="PATRIC" id="fig|208964.12.peg.5329"/>
<dbReference type="PseudoCAP" id="PA5084"/>
<dbReference type="HOGENOM" id="CLU_007884_9_2_6"/>
<dbReference type="InParanoid" id="Q9HU99"/>
<dbReference type="OrthoDB" id="18526at2"/>
<dbReference type="PhylomeDB" id="Q9HU99"/>
<dbReference type="BioCyc" id="PAER208964:G1FZ6-5200-MONOMER"/>
<dbReference type="Proteomes" id="UP000002438">
    <property type="component" value="Chromosome"/>
</dbReference>
<dbReference type="GO" id="GO:0005737">
    <property type="term" value="C:cytoplasm"/>
    <property type="evidence" value="ECO:0000318"/>
    <property type="project" value="GO_Central"/>
</dbReference>
<dbReference type="GO" id="GO:0005886">
    <property type="term" value="C:plasma membrane"/>
    <property type="evidence" value="ECO:0000318"/>
    <property type="project" value="GO_Central"/>
</dbReference>
<dbReference type="GO" id="GO:0008718">
    <property type="term" value="F:D-amino-acid dehydrogenase activity"/>
    <property type="evidence" value="ECO:0000314"/>
    <property type="project" value="PseudoCAP"/>
</dbReference>
<dbReference type="GO" id="GO:0055130">
    <property type="term" value="P:D-alanine catabolic process"/>
    <property type="evidence" value="ECO:0000318"/>
    <property type="project" value="GO_Central"/>
</dbReference>
<dbReference type="Gene3D" id="3.30.9.10">
    <property type="entry name" value="D-Amino Acid Oxidase, subunit A, domain 2"/>
    <property type="match status" value="1"/>
</dbReference>
<dbReference type="Gene3D" id="3.50.50.60">
    <property type="entry name" value="FAD/NAD(P)-binding domain"/>
    <property type="match status" value="2"/>
</dbReference>
<dbReference type="HAMAP" id="MF_01202">
    <property type="entry name" value="DadA"/>
    <property type="match status" value="1"/>
</dbReference>
<dbReference type="InterPro" id="IPR023080">
    <property type="entry name" value="DadA"/>
</dbReference>
<dbReference type="InterPro" id="IPR006076">
    <property type="entry name" value="FAD-dep_OxRdtase"/>
</dbReference>
<dbReference type="InterPro" id="IPR036188">
    <property type="entry name" value="FAD/NAD-bd_sf"/>
</dbReference>
<dbReference type="NCBIfam" id="NF001933">
    <property type="entry name" value="PRK00711.1"/>
    <property type="match status" value="1"/>
</dbReference>
<dbReference type="PANTHER" id="PTHR13847:SF280">
    <property type="entry name" value="D-AMINO ACID DEHYDROGENASE"/>
    <property type="match status" value="1"/>
</dbReference>
<dbReference type="PANTHER" id="PTHR13847">
    <property type="entry name" value="SARCOSINE DEHYDROGENASE-RELATED"/>
    <property type="match status" value="1"/>
</dbReference>
<dbReference type="Pfam" id="PF01266">
    <property type="entry name" value="DAO"/>
    <property type="match status" value="1"/>
</dbReference>
<dbReference type="SUPFAM" id="SSF54373">
    <property type="entry name" value="FAD-linked reductases, C-terminal domain"/>
    <property type="match status" value="1"/>
</dbReference>
<dbReference type="SUPFAM" id="SSF51905">
    <property type="entry name" value="FAD/NAD(P)-binding domain"/>
    <property type="match status" value="1"/>
</dbReference>
<sequence>MAQRVCIIGAGVVGLATAYALVREGFDVTLVEARERGGLETSYANGGQLSYRYVAPLADSGVPAQALGWLLRNDAPLRLRPRLDPAQWRWLLGFLAACRGSLNRRNAAHLLRLALLSQRTLQDWREEDGLDGFDWRRNGKLVAFRQPASFARARQGLADPSAQFVLTAAECLALEPALSAAPFVGGIHTPDEEVADCHAFCVQLAERLQASGHCRQLHGRRVTKIVEGGAAVRGVEVGGDLIEADHVVLAAGYRSAELMLPGLRLPLYPLKGYSLTLPVGAQHRAPDTSITDYDRKIVYARIGERLRIAAMVDIVGFDPGLEPARLALLRQQARDTFPQGGDFDAAVEWAGMRPATPTGVPLVGNGGYRNLWLNLGHGALGFTLACGSGRLLAEQIGRRPPSIDTTGLLPRGALAG</sequence>
<comment type="function">
    <text evidence="1">Oxidative deamination of D-amino acids.</text>
</comment>
<comment type="catalytic activity">
    <reaction>
        <text>a D-alpha-amino acid + A + H2O = a 2-oxocarboxylate + AH2 + NH4(+)</text>
        <dbReference type="Rhea" id="RHEA:18125"/>
        <dbReference type="ChEBI" id="CHEBI:13193"/>
        <dbReference type="ChEBI" id="CHEBI:15377"/>
        <dbReference type="ChEBI" id="CHEBI:17499"/>
        <dbReference type="ChEBI" id="CHEBI:28938"/>
        <dbReference type="ChEBI" id="CHEBI:35179"/>
        <dbReference type="ChEBI" id="CHEBI:59871"/>
    </reaction>
</comment>
<comment type="cofactor">
    <cofactor evidence="1">
        <name>FAD</name>
        <dbReference type="ChEBI" id="CHEBI:57692"/>
    </cofactor>
</comment>
<comment type="similarity">
    <text evidence="3">Belongs to the DadA oxidoreductase family.</text>
</comment>
<proteinExistence type="inferred from homology"/>
<gene>
    <name type="primary">dadA2</name>
    <name type="ordered locus">PA5084</name>
</gene>